<gene>
    <name type="primary">MYL12A</name>
    <name type="synonym">MLCB</name>
    <name type="synonym">MRLC3</name>
</gene>
<accession>Q5RC34</accession>
<reference key="1">
    <citation type="submission" date="2004-11" db="EMBL/GenBank/DDBJ databases">
        <authorList>
            <consortium name="The German cDNA consortium"/>
        </authorList>
    </citation>
    <scope>NUCLEOTIDE SEQUENCE [LARGE SCALE MRNA]</scope>
    <source>
        <tissue>Heart</tissue>
    </source>
</reference>
<feature type="chain" id="PRO_0000198734" description="Myosin regulatory light chain 12A">
    <location>
        <begin position="1"/>
        <end position="171"/>
    </location>
</feature>
<feature type="domain" description="EF-hand 1" evidence="3">
    <location>
        <begin position="28"/>
        <end position="63"/>
    </location>
</feature>
<feature type="domain" description="EF-hand 2" evidence="3">
    <location>
        <begin position="97"/>
        <end position="132"/>
    </location>
</feature>
<feature type="domain" description="EF-hand 3" evidence="3">
    <location>
        <begin position="133"/>
        <end position="168"/>
    </location>
</feature>
<feature type="binding site" evidence="3">
    <location>
        <position position="41"/>
    </location>
    <ligand>
        <name>Ca(2+)</name>
        <dbReference type="ChEBI" id="CHEBI:29108"/>
    </ligand>
</feature>
<feature type="binding site" evidence="3">
    <location>
        <position position="43"/>
    </location>
    <ligand>
        <name>Ca(2+)</name>
        <dbReference type="ChEBI" id="CHEBI:29108"/>
    </ligand>
</feature>
<feature type="binding site" evidence="3">
    <location>
        <position position="45"/>
    </location>
    <ligand>
        <name>Ca(2+)</name>
        <dbReference type="ChEBI" id="CHEBI:29108"/>
    </ligand>
</feature>
<feature type="binding site" evidence="3">
    <location>
        <position position="52"/>
    </location>
    <ligand>
        <name>Ca(2+)</name>
        <dbReference type="ChEBI" id="CHEBI:29108"/>
    </ligand>
</feature>
<feature type="modified residue" description="Phosphothreonine; by MLCK" evidence="2">
    <location>
        <position position="18"/>
    </location>
</feature>
<feature type="modified residue" description="Phosphoserine; by MLCK" evidence="2">
    <location>
        <position position="19"/>
    </location>
</feature>
<dbReference type="EMBL" id="CR858447">
    <property type="protein sequence ID" value="CAH90676.1"/>
    <property type="status" value="ALT_INIT"/>
    <property type="molecule type" value="mRNA"/>
</dbReference>
<dbReference type="RefSeq" id="NP_001125368.1">
    <property type="nucleotide sequence ID" value="NM_001131896.1"/>
</dbReference>
<dbReference type="RefSeq" id="XP_009250543.1">
    <property type="nucleotide sequence ID" value="XM_009252268.4"/>
</dbReference>
<dbReference type="RefSeq" id="XP_009250544.1">
    <property type="nucleotide sequence ID" value="XM_009252269.4"/>
</dbReference>
<dbReference type="RefSeq" id="XP_009250545.1">
    <property type="nucleotide sequence ID" value="XM_009252270.3"/>
</dbReference>
<dbReference type="SMR" id="Q5RC34"/>
<dbReference type="FunCoup" id="Q5RC34">
    <property type="interactions" value="1282"/>
</dbReference>
<dbReference type="STRING" id="9601.ENSPPYP00000010136"/>
<dbReference type="GeneID" id="100172271"/>
<dbReference type="KEGG" id="pon:100172271"/>
<dbReference type="CTD" id="10627"/>
<dbReference type="eggNOG" id="KOG0031">
    <property type="taxonomic scope" value="Eukaryota"/>
</dbReference>
<dbReference type="HOGENOM" id="CLU_061288_9_3_1"/>
<dbReference type="InParanoid" id="Q5RC34"/>
<dbReference type="OrthoDB" id="9520007at2759"/>
<dbReference type="TreeFam" id="TF314218"/>
<dbReference type="Proteomes" id="UP000001595">
    <property type="component" value="Chromosome 18"/>
</dbReference>
<dbReference type="GO" id="GO:0016459">
    <property type="term" value="C:myosin complex"/>
    <property type="evidence" value="ECO:0007669"/>
    <property type="project" value="UniProtKB-KW"/>
</dbReference>
<dbReference type="GO" id="GO:0005509">
    <property type="term" value="F:calcium ion binding"/>
    <property type="evidence" value="ECO:0007669"/>
    <property type="project" value="InterPro"/>
</dbReference>
<dbReference type="CDD" id="cd00051">
    <property type="entry name" value="EFh"/>
    <property type="match status" value="1"/>
</dbReference>
<dbReference type="FunFam" id="1.10.238.10:FF:000010">
    <property type="entry name" value="Myosin regulatory light chain 2, atrial isoform"/>
    <property type="match status" value="1"/>
</dbReference>
<dbReference type="FunFam" id="1.10.238.10:FF:000007">
    <property type="entry name" value="Putative myosin regulatory light chain sqh"/>
    <property type="match status" value="1"/>
</dbReference>
<dbReference type="Gene3D" id="1.10.238.10">
    <property type="entry name" value="EF-hand"/>
    <property type="match status" value="2"/>
</dbReference>
<dbReference type="InterPro" id="IPR011992">
    <property type="entry name" value="EF-hand-dom_pair"/>
</dbReference>
<dbReference type="InterPro" id="IPR018247">
    <property type="entry name" value="EF_Hand_1_Ca_BS"/>
</dbReference>
<dbReference type="InterPro" id="IPR015070">
    <property type="entry name" value="EF_hand_DJBP"/>
</dbReference>
<dbReference type="InterPro" id="IPR002048">
    <property type="entry name" value="EF_hand_dom"/>
</dbReference>
<dbReference type="InterPro" id="IPR050403">
    <property type="entry name" value="Myosin_RLC"/>
</dbReference>
<dbReference type="PANTHER" id="PTHR23049">
    <property type="entry name" value="MYOSIN REGULATORY LIGHT CHAIN 2"/>
    <property type="match status" value="1"/>
</dbReference>
<dbReference type="Pfam" id="PF08976">
    <property type="entry name" value="EF-hand_11"/>
    <property type="match status" value="1"/>
</dbReference>
<dbReference type="Pfam" id="PF13499">
    <property type="entry name" value="EF-hand_7"/>
    <property type="match status" value="1"/>
</dbReference>
<dbReference type="SMART" id="SM00054">
    <property type="entry name" value="EFh"/>
    <property type="match status" value="2"/>
</dbReference>
<dbReference type="SUPFAM" id="SSF47473">
    <property type="entry name" value="EF-hand"/>
    <property type="match status" value="1"/>
</dbReference>
<dbReference type="PROSITE" id="PS00018">
    <property type="entry name" value="EF_HAND_1"/>
    <property type="match status" value="1"/>
</dbReference>
<dbReference type="PROSITE" id="PS50222">
    <property type="entry name" value="EF_HAND_2"/>
    <property type="match status" value="3"/>
</dbReference>
<evidence type="ECO:0000250" key="1"/>
<evidence type="ECO:0000250" key="2">
    <source>
        <dbReference type="UniProtKB" id="P19105"/>
    </source>
</evidence>
<evidence type="ECO:0000255" key="3">
    <source>
        <dbReference type="PROSITE-ProRule" id="PRU00448"/>
    </source>
</evidence>
<evidence type="ECO:0000305" key="4"/>
<protein>
    <recommendedName>
        <fullName>Myosin regulatory light chain 12A</fullName>
    </recommendedName>
    <alternativeName>
        <fullName>Myosin RLC</fullName>
    </alternativeName>
    <alternativeName>
        <fullName>Myosin regulatory light chain 2, nonsarcomeric</fullName>
    </alternativeName>
    <alternativeName>
        <fullName>Myosin regulatory light chain MRLC3</fullName>
    </alternativeName>
</protein>
<organism>
    <name type="scientific">Pongo abelii</name>
    <name type="common">Sumatran orangutan</name>
    <name type="synonym">Pongo pygmaeus abelii</name>
    <dbReference type="NCBI Taxonomy" id="9601"/>
    <lineage>
        <taxon>Eukaryota</taxon>
        <taxon>Metazoa</taxon>
        <taxon>Chordata</taxon>
        <taxon>Craniata</taxon>
        <taxon>Vertebrata</taxon>
        <taxon>Euteleostomi</taxon>
        <taxon>Mammalia</taxon>
        <taxon>Eutheria</taxon>
        <taxon>Euarchontoglires</taxon>
        <taxon>Primates</taxon>
        <taxon>Haplorrhini</taxon>
        <taxon>Catarrhini</taxon>
        <taxon>Hominidae</taxon>
        <taxon>Pongo</taxon>
    </lineage>
</organism>
<keyword id="KW-0106">Calcium</keyword>
<keyword id="KW-0479">Metal-binding</keyword>
<keyword id="KW-0505">Motor protein</keyword>
<keyword id="KW-0514">Muscle protein</keyword>
<keyword id="KW-0518">Myosin</keyword>
<keyword id="KW-0597">Phosphoprotein</keyword>
<keyword id="KW-1185">Reference proteome</keyword>
<keyword id="KW-0677">Repeat</keyword>
<sequence>MSSKRTKTKTKKRPQRATSNVFAMFDQSQIQEFKEAFNMIDQNRDGFIDKEDLHDMLASLGKNPTDEYLDAMMNEAPGPINFTMFLTMFGEKLNGTDPEDVIRNAFACFDEEATGTIQEDYLRELLTTMGDRFTDEEVDELYREAPIDKKGNFNYIEFTRILKHGAKDKDD</sequence>
<proteinExistence type="evidence at transcript level"/>
<comment type="function">
    <text evidence="1">Myosin regulatory subunit that plays an important role in regulation of both smooth muscle and nonmuscle cell contractile activity via its phosphorylation. Implicated in cytokinesis, receptor capping, and cell locomotion (By similarity).</text>
</comment>
<comment type="subunit">
    <text evidence="1">Myosin is a hexamer of 2 heavy chains and 4 light chains.</text>
</comment>
<comment type="PTM">
    <text evidence="1">Phosphorylation increases the actin-activated myosin ATPase activity and thereby regulates the contractile activity. It is required to generate the driving force in the migration of the cells but not necessary for localization of myosin-2 at the leading edge (By similarity).</text>
</comment>
<comment type="miscellaneous">
    <text evidence="1">This chain binds calcium.</text>
</comment>
<comment type="sequence caution" evidence="4">
    <conflict type="erroneous initiation">
        <sequence resource="EMBL-CDS" id="CAH90676"/>
    </conflict>
</comment>
<name>ML12A_PONAB</name>